<dbReference type="EMBL" id="BX897700">
    <property type="protein sequence ID" value="CAF26301.1"/>
    <property type="molecule type" value="Genomic_DNA"/>
</dbReference>
<dbReference type="RefSeq" id="WP_011179547.1">
    <property type="nucleotide sequence ID" value="NC_005955.1"/>
</dbReference>
<dbReference type="SMR" id="Q6FZC7"/>
<dbReference type="KEGG" id="bqu:BQ08180"/>
<dbReference type="eggNOG" id="COG0091">
    <property type="taxonomic scope" value="Bacteria"/>
</dbReference>
<dbReference type="HOGENOM" id="CLU_083987_3_0_5"/>
<dbReference type="OrthoDB" id="9805969at2"/>
<dbReference type="Proteomes" id="UP000000597">
    <property type="component" value="Chromosome"/>
</dbReference>
<dbReference type="GO" id="GO:0022625">
    <property type="term" value="C:cytosolic large ribosomal subunit"/>
    <property type="evidence" value="ECO:0007669"/>
    <property type="project" value="TreeGrafter"/>
</dbReference>
<dbReference type="GO" id="GO:0019843">
    <property type="term" value="F:rRNA binding"/>
    <property type="evidence" value="ECO:0007669"/>
    <property type="project" value="UniProtKB-UniRule"/>
</dbReference>
<dbReference type="GO" id="GO:0003735">
    <property type="term" value="F:structural constituent of ribosome"/>
    <property type="evidence" value="ECO:0007669"/>
    <property type="project" value="InterPro"/>
</dbReference>
<dbReference type="GO" id="GO:0006412">
    <property type="term" value="P:translation"/>
    <property type="evidence" value="ECO:0007669"/>
    <property type="project" value="UniProtKB-UniRule"/>
</dbReference>
<dbReference type="CDD" id="cd00336">
    <property type="entry name" value="Ribosomal_L22"/>
    <property type="match status" value="1"/>
</dbReference>
<dbReference type="Gene3D" id="3.90.470.10">
    <property type="entry name" value="Ribosomal protein L22/L17"/>
    <property type="match status" value="1"/>
</dbReference>
<dbReference type="HAMAP" id="MF_01331_B">
    <property type="entry name" value="Ribosomal_uL22_B"/>
    <property type="match status" value="1"/>
</dbReference>
<dbReference type="InterPro" id="IPR001063">
    <property type="entry name" value="Ribosomal_uL22"/>
</dbReference>
<dbReference type="InterPro" id="IPR005727">
    <property type="entry name" value="Ribosomal_uL22_bac/chlpt-type"/>
</dbReference>
<dbReference type="InterPro" id="IPR047867">
    <property type="entry name" value="Ribosomal_uL22_bac/org-type"/>
</dbReference>
<dbReference type="InterPro" id="IPR018260">
    <property type="entry name" value="Ribosomal_uL22_CS"/>
</dbReference>
<dbReference type="InterPro" id="IPR036394">
    <property type="entry name" value="Ribosomal_uL22_sf"/>
</dbReference>
<dbReference type="NCBIfam" id="TIGR01044">
    <property type="entry name" value="rplV_bact"/>
    <property type="match status" value="1"/>
</dbReference>
<dbReference type="PANTHER" id="PTHR13501">
    <property type="entry name" value="CHLOROPLAST 50S RIBOSOMAL PROTEIN L22-RELATED"/>
    <property type="match status" value="1"/>
</dbReference>
<dbReference type="PANTHER" id="PTHR13501:SF8">
    <property type="entry name" value="LARGE RIBOSOMAL SUBUNIT PROTEIN UL22M"/>
    <property type="match status" value="1"/>
</dbReference>
<dbReference type="Pfam" id="PF00237">
    <property type="entry name" value="Ribosomal_L22"/>
    <property type="match status" value="1"/>
</dbReference>
<dbReference type="SUPFAM" id="SSF54843">
    <property type="entry name" value="Ribosomal protein L22"/>
    <property type="match status" value="1"/>
</dbReference>
<dbReference type="PROSITE" id="PS00464">
    <property type="entry name" value="RIBOSOMAL_L22"/>
    <property type="match status" value="1"/>
</dbReference>
<gene>
    <name evidence="1" type="primary">rplV</name>
    <name type="ordered locus">BQ08180</name>
</gene>
<feature type="chain" id="PRO_0000243124" description="Large ribosomal subunit protein uL22">
    <location>
        <begin position="1"/>
        <end position="129"/>
    </location>
</feature>
<organism>
    <name type="scientific">Bartonella quintana (strain Toulouse)</name>
    <name type="common">Rochalimaea quintana</name>
    <dbReference type="NCBI Taxonomy" id="283165"/>
    <lineage>
        <taxon>Bacteria</taxon>
        <taxon>Pseudomonadati</taxon>
        <taxon>Pseudomonadota</taxon>
        <taxon>Alphaproteobacteria</taxon>
        <taxon>Hyphomicrobiales</taxon>
        <taxon>Bartonellaceae</taxon>
        <taxon>Bartonella</taxon>
    </lineage>
</organism>
<name>RL22_BARQU</name>
<proteinExistence type="inferred from homology"/>
<accession>Q6FZC7</accession>
<protein>
    <recommendedName>
        <fullName evidence="1">Large ribosomal subunit protein uL22</fullName>
    </recommendedName>
    <alternativeName>
        <fullName evidence="2">50S ribosomal protein L22</fullName>
    </alternativeName>
</protein>
<comment type="function">
    <text evidence="1">This protein binds specifically to 23S rRNA; its binding is stimulated by other ribosomal proteins, e.g. L4, L17, and L20. It is important during the early stages of 50S assembly. It makes multiple contacts with different domains of the 23S rRNA in the assembled 50S subunit and ribosome (By similarity).</text>
</comment>
<comment type="function">
    <text evidence="1">The globular domain of the protein is located near the polypeptide exit tunnel on the outside of the subunit, while an extended beta-hairpin is found that lines the wall of the exit tunnel in the center of the 70S ribosome.</text>
</comment>
<comment type="subunit">
    <text evidence="1">Part of the 50S ribosomal subunit.</text>
</comment>
<comment type="similarity">
    <text evidence="1">Belongs to the universal ribosomal protein uL22 family.</text>
</comment>
<reference key="1">
    <citation type="journal article" date="2004" name="Proc. Natl. Acad. Sci. U.S.A.">
        <title>The louse-borne human pathogen Bartonella quintana is a genomic derivative of the zoonotic agent Bartonella henselae.</title>
        <authorList>
            <person name="Alsmark U.C.M."/>
            <person name="Frank A.C."/>
            <person name="Karlberg E.O."/>
            <person name="Legault B.-A."/>
            <person name="Ardell D.H."/>
            <person name="Canbaeck B."/>
            <person name="Eriksson A.-S."/>
            <person name="Naeslund A.K."/>
            <person name="Handley S.A."/>
            <person name="Huvet M."/>
            <person name="La Scola B."/>
            <person name="Holmberg M."/>
            <person name="Andersson S.G.E."/>
        </authorList>
    </citation>
    <scope>NUCLEOTIDE SEQUENCE [LARGE SCALE GENOMIC DNA]</scope>
    <source>
        <strain>Toulouse</strain>
    </source>
</reference>
<keyword id="KW-0687">Ribonucleoprotein</keyword>
<keyword id="KW-0689">Ribosomal protein</keyword>
<keyword id="KW-0694">RNA-binding</keyword>
<keyword id="KW-0699">rRNA-binding</keyword>
<evidence type="ECO:0000255" key="1">
    <source>
        <dbReference type="HAMAP-Rule" id="MF_01331"/>
    </source>
</evidence>
<evidence type="ECO:0000305" key="2"/>
<sequence>MGKAKVPRQLKDNEAKAVARTIRVSPQKLNLVVAMIRGKRVGVALADLAFSRKRIAGTVKKTLESAIANAENNHDLDIDSLIVAEAYVGKSVVVKRFHVRGRGRASRIERPFSHLTIIVREVTEKVEAA</sequence>